<keyword id="KW-0238">DNA-binding</keyword>
<keyword id="KW-0371">Homeobox</keyword>
<keyword id="KW-0479">Metal-binding</keyword>
<keyword id="KW-0539">Nucleus</keyword>
<keyword id="KW-1185">Reference proteome</keyword>
<keyword id="KW-0804">Transcription</keyword>
<keyword id="KW-0805">Transcription regulation</keyword>
<keyword id="KW-0862">Zinc</keyword>
<keyword id="KW-0863">Zinc-finger</keyword>
<gene>
    <name type="primary">ZHD1</name>
    <name type="ordered locus">Os09g0466400</name>
    <name type="ordered locus">LOC_Os09g29130</name>
    <name type="ORF">OJ1005_D12.28</name>
    <name type="ORF">OsJ_29679</name>
</gene>
<accession>Q6YXH5</accession>
<accession>A0A0P0XP63</accession>
<accession>B9G420</accession>
<protein>
    <recommendedName>
        <fullName>Zinc-finger homeodomain protein 1</fullName>
        <shortName>OsZHD1</shortName>
    </recommendedName>
</protein>
<feature type="chain" id="PRO_0000426035" description="Zinc-finger homeodomain protein 1">
    <location>
        <begin position="1"/>
        <end position="279"/>
    </location>
</feature>
<feature type="zinc finger region" description="ZF-HD dimerization-type; degenerate" evidence="2">
    <location>
        <begin position="57"/>
        <end position="106"/>
    </location>
</feature>
<feature type="DNA-binding region" description="Homeobox">
    <location>
        <begin position="215"/>
        <end position="278"/>
    </location>
</feature>
<feature type="region of interest" description="Disordered" evidence="3">
    <location>
        <begin position="1"/>
        <end position="47"/>
    </location>
</feature>
<feature type="region of interest" description="Disordered" evidence="3">
    <location>
        <begin position="168"/>
        <end position="190"/>
    </location>
</feature>
<feature type="compositionally biased region" description="Acidic residues" evidence="3">
    <location>
        <begin position="1"/>
        <end position="13"/>
    </location>
</feature>
<feature type="site" description="Required for DNA-binding" evidence="1">
    <location>
        <position position="267"/>
    </location>
</feature>
<sequence>MDFDDHDDGDEEMPPMPVSSSYETPPQHGLAGGGMAPKPPGEIGSRVKGPSCGGGRYRECLKNHAVGIGGHAVDGCGEFMAAGEEGTIDALRCAACNCHRNFHRKESESLAGEGSPFSPAAVVPYGATPHHQFSPYYRTPAGYLHHHQHHMAAAAAAAAAAAGGYPQRPLALPSTSHSGRDDGDDLSGMVGPMSAVGPLSGMSLGAGPSGSGSGKKRFRTKFTQEQKDKMLAFAERVGWRIQKHDEAAVQQFCDEVGVKRHVLKVWMHNNKHTLGKKLP</sequence>
<comment type="function">
    <text evidence="1">Putative transcription factor.</text>
</comment>
<comment type="subunit">
    <text evidence="1">Homo- and heterodimer with other ZFHD proteins.</text>
</comment>
<comment type="subcellular location">
    <subcellularLocation>
        <location evidence="1">Nucleus</location>
    </subcellularLocation>
</comment>
<comment type="domain">
    <text>The homeodomain differs form the typical one by having namely 4 instead of 3 extra amino acids inserted in the loop between helix 1 and helix 2.</text>
</comment>
<comment type="sequence caution" evidence="4">
    <conflict type="erroneous gene model prediction">
        <sequence resource="EMBL-CDS" id="EEE69868"/>
    </conflict>
</comment>
<evidence type="ECO:0000250" key="1"/>
<evidence type="ECO:0000255" key="2">
    <source>
        <dbReference type="PROSITE-ProRule" id="PRU00856"/>
    </source>
</evidence>
<evidence type="ECO:0000256" key="3">
    <source>
        <dbReference type="SAM" id="MobiDB-lite"/>
    </source>
</evidence>
<evidence type="ECO:0000305" key="4"/>
<dbReference type="EMBL" id="AP005676">
    <property type="protein sequence ID" value="BAD17515.1"/>
    <property type="molecule type" value="Genomic_DNA"/>
</dbReference>
<dbReference type="EMBL" id="AP008215">
    <property type="protein sequence ID" value="BAF25333.1"/>
    <property type="molecule type" value="Genomic_DNA"/>
</dbReference>
<dbReference type="EMBL" id="AP014965">
    <property type="protein sequence ID" value="BAT08521.1"/>
    <property type="molecule type" value="Genomic_DNA"/>
</dbReference>
<dbReference type="EMBL" id="CM000146">
    <property type="protein sequence ID" value="EEE69868.1"/>
    <property type="status" value="ALT_SEQ"/>
    <property type="molecule type" value="Genomic_DNA"/>
</dbReference>
<dbReference type="EMBL" id="AK108246">
    <property type="protein sequence ID" value="BAG98341.1"/>
    <property type="molecule type" value="mRNA"/>
</dbReference>
<dbReference type="RefSeq" id="XP_015610854.1">
    <property type="nucleotide sequence ID" value="XM_015755368.1"/>
</dbReference>
<dbReference type="SMR" id="Q6YXH5"/>
<dbReference type="FunCoup" id="Q6YXH5">
    <property type="interactions" value="570"/>
</dbReference>
<dbReference type="STRING" id="39947.Q6YXH5"/>
<dbReference type="PaxDb" id="39947-Q6YXH5"/>
<dbReference type="EnsemblPlants" id="Os09t0466400-01">
    <property type="protein sequence ID" value="Os09t0466400-01"/>
    <property type="gene ID" value="Os09g0466400"/>
</dbReference>
<dbReference type="Gramene" id="Os09t0466400-01">
    <property type="protein sequence ID" value="Os09t0466400-01"/>
    <property type="gene ID" value="Os09g0466400"/>
</dbReference>
<dbReference type="KEGG" id="dosa:Os09g0466400"/>
<dbReference type="eggNOG" id="ENOG502QRG0">
    <property type="taxonomic scope" value="Eukaryota"/>
</dbReference>
<dbReference type="HOGENOM" id="CLU_039237_2_2_1"/>
<dbReference type="InParanoid" id="Q6YXH5"/>
<dbReference type="OMA" id="CNDTGVK"/>
<dbReference type="OrthoDB" id="1921929at2759"/>
<dbReference type="Proteomes" id="UP000000763">
    <property type="component" value="Chromosome 9"/>
</dbReference>
<dbReference type="Proteomes" id="UP000007752">
    <property type="component" value="Chromosome 9"/>
</dbReference>
<dbReference type="Proteomes" id="UP000059680">
    <property type="component" value="Chromosome 9"/>
</dbReference>
<dbReference type="GO" id="GO:0005634">
    <property type="term" value="C:nucleus"/>
    <property type="evidence" value="ECO:0000318"/>
    <property type="project" value="GO_Central"/>
</dbReference>
<dbReference type="GO" id="GO:0003700">
    <property type="term" value="F:DNA-binding transcription factor activity"/>
    <property type="evidence" value="ECO:0000318"/>
    <property type="project" value="GO_Central"/>
</dbReference>
<dbReference type="GO" id="GO:0000976">
    <property type="term" value="F:transcription cis-regulatory region binding"/>
    <property type="evidence" value="ECO:0000318"/>
    <property type="project" value="GO_Central"/>
</dbReference>
<dbReference type="GO" id="GO:0008270">
    <property type="term" value="F:zinc ion binding"/>
    <property type="evidence" value="ECO:0007669"/>
    <property type="project" value="UniProtKB-KW"/>
</dbReference>
<dbReference type="GO" id="GO:0006355">
    <property type="term" value="P:regulation of DNA-templated transcription"/>
    <property type="evidence" value="ECO:0000318"/>
    <property type="project" value="GO_Central"/>
</dbReference>
<dbReference type="FunFam" id="1.10.10.60:FF:000257">
    <property type="entry name" value="Zinc-finger homeodomain protein 2"/>
    <property type="match status" value="1"/>
</dbReference>
<dbReference type="Gene3D" id="1.10.10.60">
    <property type="entry name" value="Homeodomain-like"/>
    <property type="match status" value="1"/>
</dbReference>
<dbReference type="InterPro" id="IPR009057">
    <property type="entry name" value="Homeodomain-like_sf"/>
</dbReference>
<dbReference type="InterPro" id="IPR006455">
    <property type="entry name" value="Homeodomain_ZF_HD"/>
</dbReference>
<dbReference type="InterPro" id="IPR006456">
    <property type="entry name" value="ZF_HD_homeobox_Cys/His_dimer"/>
</dbReference>
<dbReference type="NCBIfam" id="TIGR01565">
    <property type="entry name" value="homeo_ZF_HD"/>
    <property type="match status" value="1"/>
</dbReference>
<dbReference type="NCBIfam" id="TIGR01566">
    <property type="entry name" value="ZF_HD_prot_N"/>
    <property type="match status" value="1"/>
</dbReference>
<dbReference type="PANTHER" id="PTHR31948">
    <property type="entry name" value="ZINC-FINGER HOMEODOMAIN PROTEIN 2"/>
    <property type="match status" value="1"/>
</dbReference>
<dbReference type="PANTHER" id="PTHR31948:SF140">
    <property type="entry name" value="ZINC-FINGER HOMEODOMAIN PROTEIN 2"/>
    <property type="match status" value="1"/>
</dbReference>
<dbReference type="Pfam" id="PF04770">
    <property type="entry name" value="ZF-HD_dimer"/>
    <property type="match status" value="1"/>
</dbReference>
<dbReference type="SUPFAM" id="SSF46689">
    <property type="entry name" value="Homeodomain-like"/>
    <property type="match status" value="1"/>
</dbReference>
<dbReference type="PROSITE" id="PS51523">
    <property type="entry name" value="ZF_HD_DIMER"/>
    <property type="match status" value="1"/>
</dbReference>
<reference key="1">
    <citation type="journal article" date="2005" name="Nature">
        <title>The map-based sequence of the rice genome.</title>
        <authorList>
            <consortium name="International rice genome sequencing project (IRGSP)"/>
        </authorList>
    </citation>
    <scope>NUCLEOTIDE SEQUENCE [LARGE SCALE GENOMIC DNA]</scope>
    <source>
        <strain>cv. Nipponbare</strain>
    </source>
</reference>
<reference key="2">
    <citation type="journal article" date="2008" name="Nucleic Acids Res.">
        <title>The rice annotation project database (RAP-DB): 2008 update.</title>
        <authorList>
            <consortium name="The rice annotation project (RAP)"/>
        </authorList>
    </citation>
    <scope>GENOME REANNOTATION</scope>
    <source>
        <strain>cv. Nipponbare</strain>
    </source>
</reference>
<reference key="3">
    <citation type="journal article" date="2013" name="Rice">
        <title>Improvement of the Oryza sativa Nipponbare reference genome using next generation sequence and optical map data.</title>
        <authorList>
            <person name="Kawahara Y."/>
            <person name="de la Bastide M."/>
            <person name="Hamilton J.P."/>
            <person name="Kanamori H."/>
            <person name="McCombie W.R."/>
            <person name="Ouyang S."/>
            <person name="Schwartz D.C."/>
            <person name="Tanaka T."/>
            <person name="Wu J."/>
            <person name="Zhou S."/>
            <person name="Childs K.L."/>
            <person name="Davidson R.M."/>
            <person name="Lin H."/>
            <person name="Quesada-Ocampo L."/>
            <person name="Vaillancourt B."/>
            <person name="Sakai H."/>
            <person name="Lee S.S."/>
            <person name="Kim J."/>
            <person name="Numa H."/>
            <person name="Itoh T."/>
            <person name="Buell C.R."/>
            <person name="Matsumoto T."/>
        </authorList>
    </citation>
    <scope>GENOME REANNOTATION</scope>
    <source>
        <strain>cv. Nipponbare</strain>
    </source>
</reference>
<reference key="4">
    <citation type="journal article" date="2005" name="PLoS Biol.">
        <title>The genomes of Oryza sativa: a history of duplications.</title>
        <authorList>
            <person name="Yu J."/>
            <person name="Wang J."/>
            <person name="Lin W."/>
            <person name="Li S."/>
            <person name="Li H."/>
            <person name="Zhou J."/>
            <person name="Ni P."/>
            <person name="Dong W."/>
            <person name="Hu S."/>
            <person name="Zeng C."/>
            <person name="Zhang J."/>
            <person name="Zhang Y."/>
            <person name="Li R."/>
            <person name="Xu Z."/>
            <person name="Li S."/>
            <person name="Li X."/>
            <person name="Zheng H."/>
            <person name="Cong L."/>
            <person name="Lin L."/>
            <person name="Yin J."/>
            <person name="Geng J."/>
            <person name="Li G."/>
            <person name="Shi J."/>
            <person name="Liu J."/>
            <person name="Lv H."/>
            <person name="Li J."/>
            <person name="Wang J."/>
            <person name="Deng Y."/>
            <person name="Ran L."/>
            <person name="Shi X."/>
            <person name="Wang X."/>
            <person name="Wu Q."/>
            <person name="Li C."/>
            <person name="Ren X."/>
            <person name="Wang J."/>
            <person name="Wang X."/>
            <person name="Li D."/>
            <person name="Liu D."/>
            <person name="Zhang X."/>
            <person name="Ji Z."/>
            <person name="Zhao W."/>
            <person name="Sun Y."/>
            <person name="Zhang Z."/>
            <person name="Bao J."/>
            <person name="Han Y."/>
            <person name="Dong L."/>
            <person name="Ji J."/>
            <person name="Chen P."/>
            <person name="Wu S."/>
            <person name="Liu J."/>
            <person name="Xiao Y."/>
            <person name="Bu D."/>
            <person name="Tan J."/>
            <person name="Yang L."/>
            <person name="Ye C."/>
            <person name="Zhang J."/>
            <person name="Xu J."/>
            <person name="Zhou Y."/>
            <person name="Yu Y."/>
            <person name="Zhang B."/>
            <person name="Zhuang S."/>
            <person name="Wei H."/>
            <person name="Liu B."/>
            <person name="Lei M."/>
            <person name="Yu H."/>
            <person name="Li Y."/>
            <person name="Xu H."/>
            <person name="Wei S."/>
            <person name="He X."/>
            <person name="Fang L."/>
            <person name="Zhang Z."/>
            <person name="Zhang Y."/>
            <person name="Huang X."/>
            <person name="Su Z."/>
            <person name="Tong W."/>
            <person name="Li J."/>
            <person name="Tong Z."/>
            <person name="Li S."/>
            <person name="Ye J."/>
            <person name="Wang L."/>
            <person name="Fang L."/>
            <person name="Lei T."/>
            <person name="Chen C.-S."/>
            <person name="Chen H.-C."/>
            <person name="Xu Z."/>
            <person name="Li H."/>
            <person name="Huang H."/>
            <person name="Zhang F."/>
            <person name="Xu H."/>
            <person name="Li N."/>
            <person name="Zhao C."/>
            <person name="Li S."/>
            <person name="Dong L."/>
            <person name="Huang Y."/>
            <person name="Li L."/>
            <person name="Xi Y."/>
            <person name="Qi Q."/>
            <person name="Li W."/>
            <person name="Zhang B."/>
            <person name="Hu W."/>
            <person name="Zhang Y."/>
            <person name="Tian X."/>
            <person name="Jiao Y."/>
            <person name="Liang X."/>
            <person name="Jin J."/>
            <person name="Gao L."/>
            <person name="Zheng W."/>
            <person name="Hao B."/>
            <person name="Liu S.-M."/>
            <person name="Wang W."/>
            <person name="Yuan L."/>
            <person name="Cao M."/>
            <person name="McDermott J."/>
            <person name="Samudrala R."/>
            <person name="Wang J."/>
            <person name="Wong G.K.-S."/>
            <person name="Yang H."/>
        </authorList>
    </citation>
    <scope>NUCLEOTIDE SEQUENCE [LARGE SCALE GENOMIC DNA]</scope>
    <source>
        <strain>cv. Nipponbare</strain>
    </source>
</reference>
<reference key="5">
    <citation type="journal article" date="2003" name="Science">
        <title>Collection, mapping, and annotation of over 28,000 cDNA clones from japonica rice.</title>
        <authorList>
            <consortium name="The rice full-length cDNA consortium"/>
        </authorList>
    </citation>
    <scope>NUCLEOTIDE SEQUENCE [LARGE SCALE MRNA]</scope>
    <source>
        <strain>cv. Nipponbare</strain>
    </source>
</reference>
<reference key="6">
    <citation type="journal article" date="2008" name="J. Integr. Plant Biol.">
        <title>Phylogenetic analysis of the plant-specific zinc finger-homeobox and mini zinc finger gene families.</title>
        <authorList>
            <person name="Hu W."/>
            <person name="dePamphilis C.W."/>
            <person name="Ma H."/>
        </authorList>
    </citation>
    <scope>GENE FAMILY</scope>
    <scope>NOMENCLATURE</scope>
</reference>
<proteinExistence type="evidence at transcript level"/>
<organism>
    <name type="scientific">Oryza sativa subsp. japonica</name>
    <name type="common">Rice</name>
    <dbReference type="NCBI Taxonomy" id="39947"/>
    <lineage>
        <taxon>Eukaryota</taxon>
        <taxon>Viridiplantae</taxon>
        <taxon>Streptophyta</taxon>
        <taxon>Embryophyta</taxon>
        <taxon>Tracheophyta</taxon>
        <taxon>Spermatophyta</taxon>
        <taxon>Magnoliopsida</taxon>
        <taxon>Liliopsida</taxon>
        <taxon>Poales</taxon>
        <taxon>Poaceae</taxon>
        <taxon>BOP clade</taxon>
        <taxon>Oryzoideae</taxon>
        <taxon>Oryzeae</taxon>
        <taxon>Oryzinae</taxon>
        <taxon>Oryza</taxon>
        <taxon>Oryza sativa</taxon>
    </lineage>
</organism>
<name>ZHD1_ORYSJ</name>